<evidence type="ECO:0000250" key="1">
    <source>
        <dbReference type="UniProtKB" id="Q61184"/>
    </source>
</evidence>
<evidence type="ECO:0000255" key="2"/>
<evidence type="ECO:0000255" key="3">
    <source>
        <dbReference type="PROSITE-ProRule" id="PRU00521"/>
    </source>
</evidence>
<evidence type="ECO:0000256" key="4">
    <source>
        <dbReference type="SAM" id="MobiDB-lite"/>
    </source>
</evidence>
<name>MTR1A_PHOSU</name>
<feature type="chain" id="PRO_0000069864" description="Melatonin receptor type 1A">
    <location>
        <begin position="1"/>
        <end position="353"/>
    </location>
</feature>
<feature type="topological domain" description="Extracellular" evidence="2">
    <location>
        <begin position="1"/>
        <end position="32"/>
    </location>
</feature>
<feature type="transmembrane region" description="Helical; Name=1" evidence="2">
    <location>
        <begin position="33"/>
        <end position="53"/>
    </location>
</feature>
<feature type="topological domain" description="Cytoplasmic" evidence="2">
    <location>
        <begin position="54"/>
        <end position="66"/>
    </location>
</feature>
<feature type="transmembrane region" description="Helical; Name=2" evidence="2">
    <location>
        <begin position="67"/>
        <end position="87"/>
    </location>
</feature>
<feature type="topological domain" description="Extracellular" evidence="2">
    <location>
        <begin position="88"/>
        <end position="105"/>
    </location>
</feature>
<feature type="transmembrane region" description="Helical; Name=3" evidence="2">
    <location>
        <begin position="106"/>
        <end position="126"/>
    </location>
</feature>
<feature type="topological domain" description="Cytoplasmic" evidence="2">
    <location>
        <begin position="127"/>
        <end position="147"/>
    </location>
</feature>
<feature type="transmembrane region" description="Helical; Name=4" evidence="2">
    <location>
        <begin position="148"/>
        <end position="168"/>
    </location>
</feature>
<feature type="topological domain" description="Extracellular" evidence="2">
    <location>
        <begin position="169"/>
        <end position="190"/>
    </location>
</feature>
<feature type="transmembrane region" description="Helical; Name=5" evidence="2">
    <location>
        <begin position="191"/>
        <end position="211"/>
    </location>
</feature>
<feature type="topological domain" description="Cytoplasmic" evidence="2">
    <location>
        <begin position="212"/>
        <end position="243"/>
    </location>
</feature>
<feature type="transmembrane region" description="Helical; Name=6" evidence="2">
    <location>
        <begin position="244"/>
        <end position="264"/>
    </location>
</feature>
<feature type="topological domain" description="Extracellular" evidence="2">
    <location>
        <begin position="265"/>
        <end position="277"/>
    </location>
</feature>
<feature type="transmembrane region" description="Helical; Name=7" evidence="2">
    <location>
        <begin position="278"/>
        <end position="298"/>
    </location>
</feature>
<feature type="topological domain" description="Cytoplasmic" evidence="2">
    <location>
        <begin position="299"/>
        <end position="353"/>
    </location>
</feature>
<feature type="region of interest" description="Disordered" evidence="4">
    <location>
        <begin position="1"/>
        <end position="23"/>
    </location>
</feature>
<feature type="compositionally biased region" description="Polar residues" evidence="4">
    <location>
        <begin position="1"/>
        <end position="15"/>
    </location>
</feature>
<feature type="glycosylation site" description="N-linked (GlcNAc...) asparagine" evidence="2">
    <location>
        <position position="4"/>
    </location>
</feature>
<feature type="glycosylation site" description="N-linked (GlcNAc...) asparagine" evidence="2">
    <location>
        <position position="10"/>
    </location>
</feature>
<feature type="disulfide bond" evidence="3">
    <location>
        <begin position="103"/>
        <end position="180"/>
    </location>
</feature>
<comment type="function">
    <text evidence="1">High affinity receptor for melatonin. Likely to mediate the reproductive and circadian actions of melatonin. The activity of this receptor is mediated by pertussis toxin sensitive G proteins that inhibit adenylate cyclase activity. Possibly involved in sleep induction, by melatonin activation of the potassium channel KCNMA1/BK and the dissociation of G-beta and G-gamma subunits, thereby decreasing synaptic transmission (By similarity).</text>
</comment>
<comment type="subcellular location">
    <subcellularLocation>
        <location>Cell membrane</location>
        <topology>Multi-pass membrane protein</topology>
    </subcellularLocation>
</comment>
<comment type="tissue specificity">
    <text>At least in the brain, more precisely in the pars tuberalis and the suprachiasmatic nucleus.</text>
</comment>
<comment type="similarity">
    <text evidence="3">Belongs to the G-protein coupled receptor 1 family.</text>
</comment>
<keyword id="KW-1003">Cell membrane</keyword>
<keyword id="KW-1015">Disulfide bond</keyword>
<keyword id="KW-0297">G-protein coupled receptor</keyword>
<keyword id="KW-0325">Glycoprotein</keyword>
<keyword id="KW-0472">Membrane</keyword>
<keyword id="KW-0675">Receptor</keyword>
<keyword id="KW-0807">Transducer</keyword>
<keyword id="KW-0812">Transmembrane</keyword>
<keyword id="KW-1133">Transmembrane helix</keyword>
<proteinExistence type="evidence at transcript level"/>
<reference key="1">
    <citation type="submission" date="1996-11" db="EMBL/GenBank/DDBJ databases">
        <authorList>
            <person name="Weaver D.R."/>
            <person name="Liu C."/>
            <person name="Reppert S.M."/>
        </authorList>
    </citation>
    <scope>NUCLEOTIDE SEQUENCE [MRNA]</scope>
</reference>
<reference key="2">
    <citation type="journal article" date="1994" name="Neuron">
        <title>Cloning and characterization of a mammalian melatonin receptor that mediates reproductive and circadian responses.</title>
        <authorList>
            <person name="Reppert S.M."/>
            <person name="Weaver D.R."/>
            <person name="Ebisawa T."/>
        </authorList>
    </citation>
    <scope>NUCLEOTIDE SEQUENCE [MRNA] OF 130-285</scope>
    <source>
        <tissue>Hypothalamus</tissue>
        <tissue>Pituitary pars tuberalis</tissue>
    </source>
</reference>
<organism>
    <name type="scientific">Phodopus sungorus</name>
    <name type="common">Striped hairy-footed hamster</name>
    <name type="synonym">Djungarian hamster</name>
    <dbReference type="NCBI Taxonomy" id="10044"/>
    <lineage>
        <taxon>Eukaryota</taxon>
        <taxon>Metazoa</taxon>
        <taxon>Chordata</taxon>
        <taxon>Craniata</taxon>
        <taxon>Vertebrata</taxon>
        <taxon>Euteleostomi</taxon>
        <taxon>Mammalia</taxon>
        <taxon>Eutheria</taxon>
        <taxon>Euarchontoglires</taxon>
        <taxon>Glires</taxon>
        <taxon>Rodentia</taxon>
        <taxon>Myomorpha</taxon>
        <taxon>Muroidea</taxon>
        <taxon>Cricetidae</taxon>
        <taxon>Cricetinae</taxon>
        <taxon>Phodopus</taxon>
    </lineage>
</organism>
<accession>P49217</accession>
<dbReference type="EMBL" id="U14110">
    <property type="protein sequence ID" value="AAB17722.1"/>
    <property type="molecule type" value="mRNA"/>
</dbReference>
<dbReference type="PIR" id="I84498">
    <property type="entry name" value="I84498"/>
</dbReference>
<dbReference type="SMR" id="P49217"/>
<dbReference type="GlyCosmos" id="P49217">
    <property type="glycosylation" value="2 sites, No reported glycans"/>
</dbReference>
<dbReference type="GO" id="GO:0005886">
    <property type="term" value="C:plasma membrane"/>
    <property type="evidence" value="ECO:0007669"/>
    <property type="project" value="UniProtKB-SubCell"/>
</dbReference>
<dbReference type="GO" id="GO:0008502">
    <property type="term" value="F:melatonin receptor activity"/>
    <property type="evidence" value="ECO:0007669"/>
    <property type="project" value="InterPro"/>
</dbReference>
<dbReference type="FunFam" id="1.20.1070.10:FF:000056">
    <property type="entry name" value="Melatonin receptor type 1A"/>
    <property type="match status" value="1"/>
</dbReference>
<dbReference type="Gene3D" id="1.20.1070.10">
    <property type="entry name" value="Rhodopsin 7-helix transmembrane proteins"/>
    <property type="match status" value="1"/>
</dbReference>
<dbReference type="InterPro" id="IPR000276">
    <property type="entry name" value="GPCR_Rhodpsn"/>
</dbReference>
<dbReference type="InterPro" id="IPR017452">
    <property type="entry name" value="GPCR_Rhodpsn_7TM"/>
</dbReference>
<dbReference type="InterPro" id="IPR002278">
    <property type="entry name" value="Mel_1A/1B_rcpt"/>
</dbReference>
<dbReference type="InterPro" id="IPR000025">
    <property type="entry name" value="Melatonin_rcpt"/>
</dbReference>
<dbReference type="PANTHER" id="PTHR24228">
    <property type="entry name" value="B2 BRADYKININ RECEPTOR/ANGIOTENSIN II RECEPTOR"/>
    <property type="match status" value="1"/>
</dbReference>
<dbReference type="PANTHER" id="PTHR24228:SF53">
    <property type="entry name" value="MELATONIN RECEPTOR TYPE 1A"/>
    <property type="match status" value="1"/>
</dbReference>
<dbReference type="Pfam" id="PF00001">
    <property type="entry name" value="7tm_1"/>
    <property type="match status" value="1"/>
</dbReference>
<dbReference type="PRINTS" id="PR00237">
    <property type="entry name" value="GPCRRHODOPSN"/>
</dbReference>
<dbReference type="PRINTS" id="PR01149">
    <property type="entry name" value="MELATONIN1AR"/>
</dbReference>
<dbReference type="PRINTS" id="PR00857">
    <property type="entry name" value="MELATONINR"/>
</dbReference>
<dbReference type="SMART" id="SM01381">
    <property type="entry name" value="7TM_GPCR_Srsx"/>
    <property type="match status" value="1"/>
</dbReference>
<dbReference type="SUPFAM" id="SSF81321">
    <property type="entry name" value="Family A G protein-coupled receptor-like"/>
    <property type="match status" value="1"/>
</dbReference>
<dbReference type="PROSITE" id="PS00237">
    <property type="entry name" value="G_PROTEIN_RECEP_F1_1"/>
    <property type="match status" value="1"/>
</dbReference>
<dbReference type="PROSITE" id="PS50262">
    <property type="entry name" value="G_PROTEIN_RECEP_F1_2"/>
    <property type="match status" value="1"/>
</dbReference>
<gene>
    <name type="primary">MTNR1A</name>
</gene>
<protein>
    <recommendedName>
        <fullName>Melatonin receptor type 1A</fullName>
        <shortName>Mel-1A-R</shortName>
        <shortName>Mel1a receptor</shortName>
    </recommendedName>
</protein>
<sequence length="353" mass="39685">MKGNGSTLLNASQQAPGVGEGGGPRPSWLASTLAFILIFTIVVDILGNLLVILSVYRNKKLRNAGNIFVVSLAIADLVVAIYPYPLVLTSIFNNGWNLGYLHCQISAFLMGLSVIGSIFNITGIAINRYCYICHSLKYDRLYSNKNSLCYVFLIWVLTLVAIMPNLQTGTLQYDPRIYSCTFTQSVSSAYTIAVVVFHFIVPMIIVIFCYLRIWILVLQVRRRVKPDSKPRLKPQDFRNFVTMFVVFVLFAICWAPLNFIGLIVASDPATMAPRIPEWLFVASYYMAYFNSCLNAIIYGLLNQNFRQEYKRILVSLFTAKMCFVDSSNDPADKIKCKPAPLIANNNLIKVDSV</sequence>